<name>T10B_DROME</name>
<sequence length="117" mass="13520">MDSNLRNLKDFFTLYNKVTELCFSRCVDNLSQRDLGGHEDLCVDRCVTKFARFNQNMMKVYVDVQTTINAKRMEEMEENARKAEQQQREQEKERLKEAAATAVLTPVQPPVAGNLSM</sequence>
<proteinExistence type="inferred from homology"/>
<feature type="chain" id="PRO_0000193604" description="Mitochondrial import inner membrane translocase subunit Tim10B">
    <location>
        <begin position="1"/>
        <end position="117"/>
    </location>
</feature>
<feature type="region of interest" description="Disordered" evidence="2">
    <location>
        <begin position="75"/>
        <end position="117"/>
    </location>
</feature>
<feature type="short sequence motif" description="Twin CX3C motif">
    <location>
        <begin position="22"/>
        <end position="46"/>
    </location>
</feature>
<feature type="compositionally biased region" description="Basic and acidic residues" evidence="2">
    <location>
        <begin position="75"/>
        <end position="97"/>
    </location>
</feature>
<feature type="disulfide bond" evidence="1">
    <location>
        <begin position="22"/>
        <end position="46"/>
    </location>
</feature>
<feature type="disulfide bond" evidence="1">
    <location>
        <begin position="26"/>
        <end position="42"/>
    </location>
</feature>
<accession>Q9Y0V3</accession>
<accession>A4V4S9</accession>
<dbReference type="EMBL" id="AF150104">
    <property type="protein sequence ID" value="AAD40010.1"/>
    <property type="molecule type" value="mRNA"/>
</dbReference>
<dbReference type="EMBL" id="AE014298">
    <property type="protein sequence ID" value="AAF48984.2"/>
    <property type="molecule type" value="Genomic_DNA"/>
</dbReference>
<dbReference type="EMBL" id="AE014298">
    <property type="protein sequence ID" value="AAO41712.1"/>
    <property type="molecule type" value="Genomic_DNA"/>
</dbReference>
<dbReference type="RefSeq" id="NP_001027074.1">
    <property type="nucleotide sequence ID" value="NM_001031903.2"/>
</dbReference>
<dbReference type="RefSeq" id="NP_001027075.1">
    <property type="nucleotide sequence ID" value="NM_001031904.3"/>
</dbReference>
<dbReference type="SMR" id="Q9Y0V3"/>
<dbReference type="FunCoup" id="Q9Y0V3">
    <property type="interactions" value="364"/>
</dbReference>
<dbReference type="STRING" id="7227.FBpp0074536"/>
<dbReference type="PaxDb" id="7227-FBpp0074536"/>
<dbReference type="DNASU" id="3772213"/>
<dbReference type="EnsemblMetazoa" id="FBtr0074767">
    <property type="protein sequence ID" value="FBpp0074536"/>
    <property type="gene ID" value="FBgn0027358"/>
</dbReference>
<dbReference type="EnsemblMetazoa" id="FBtr0344072">
    <property type="protein sequence ID" value="FBpp0310503"/>
    <property type="gene ID" value="FBgn0027358"/>
</dbReference>
<dbReference type="GeneID" id="3772213"/>
<dbReference type="KEGG" id="dme:Dmel_CG17767"/>
<dbReference type="UCSC" id="CG17767-RB">
    <property type="organism name" value="d. melanogaster"/>
</dbReference>
<dbReference type="AGR" id="FB:FBgn0027358"/>
<dbReference type="CTD" id="3772213"/>
<dbReference type="FlyBase" id="FBgn0027358">
    <property type="gene designation" value="Tim9b"/>
</dbReference>
<dbReference type="VEuPathDB" id="VectorBase:FBgn0027358"/>
<dbReference type="eggNOG" id="KOG3479">
    <property type="taxonomic scope" value="Eukaryota"/>
</dbReference>
<dbReference type="GeneTree" id="ENSGT00450000040326"/>
<dbReference type="HOGENOM" id="CLU_141397_2_1_1"/>
<dbReference type="InParanoid" id="Q9Y0V3"/>
<dbReference type="OMA" id="FNRCVDN"/>
<dbReference type="OrthoDB" id="1551503at2759"/>
<dbReference type="PhylomeDB" id="Q9Y0V3"/>
<dbReference type="Reactome" id="R-DME-1268020">
    <property type="pathway name" value="Mitochondrial protein import"/>
</dbReference>
<dbReference type="BioGRID-ORCS" id="3772213">
    <property type="hits" value="1 hit in 1 CRISPR screen"/>
</dbReference>
<dbReference type="ChiTaRS" id="Tim9b">
    <property type="organism name" value="fly"/>
</dbReference>
<dbReference type="GenomeRNAi" id="3772213"/>
<dbReference type="PRO" id="PR:Q9Y0V3"/>
<dbReference type="Proteomes" id="UP000000803">
    <property type="component" value="Chromosome X"/>
</dbReference>
<dbReference type="Bgee" id="FBgn0027358">
    <property type="expression patterns" value="Expressed in ovary and 8 other cell types or tissues"/>
</dbReference>
<dbReference type="GO" id="GO:0005758">
    <property type="term" value="C:mitochondrial intermembrane space"/>
    <property type="evidence" value="ECO:0000250"/>
    <property type="project" value="FlyBase"/>
</dbReference>
<dbReference type="GO" id="GO:0042719">
    <property type="term" value="C:mitochondrial intermembrane space protein transporter complex"/>
    <property type="evidence" value="ECO:0000250"/>
    <property type="project" value="FlyBase"/>
</dbReference>
<dbReference type="GO" id="GO:0042721">
    <property type="term" value="C:TIM22 mitochondrial import inner membrane insertion complex"/>
    <property type="evidence" value="ECO:0000250"/>
    <property type="project" value="FlyBase"/>
</dbReference>
<dbReference type="GO" id="GO:0046872">
    <property type="term" value="F:metal ion binding"/>
    <property type="evidence" value="ECO:0007669"/>
    <property type="project" value="UniProtKB-KW"/>
</dbReference>
<dbReference type="GO" id="GO:0051082">
    <property type="term" value="F:unfolded protein binding"/>
    <property type="evidence" value="ECO:0000250"/>
    <property type="project" value="FlyBase"/>
</dbReference>
<dbReference type="GO" id="GO:0071456">
    <property type="term" value="P:cellular response to hypoxia"/>
    <property type="evidence" value="ECO:0000315"/>
    <property type="project" value="FlyBase"/>
</dbReference>
<dbReference type="GO" id="GO:0045039">
    <property type="term" value="P:protein insertion into mitochondrial inner membrane"/>
    <property type="evidence" value="ECO:0000250"/>
    <property type="project" value="FlyBase"/>
</dbReference>
<dbReference type="FunFam" id="1.10.287.810:FF:000013">
    <property type="entry name" value="Mitochondrial GE17372"/>
    <property type="match status" value="1"/>
</dbReference>
<dbReference type="Gene3D" id="1.10.287.810">
    <property type="entry name" value="Mitochondrial import inner membrane translocase subunit tim13 like domains"/>
    <property type="match status" value="1"/>
</dbReference>
<dbReference type="InterPro" id="IPR050673">
    <property type="entry name" value="Mito_inner_translocase_sub"/>
</dbReference>
<dbReference type="InterPro" id="IPR004217">
    <property type="entry name" value="Tim10-like"/>
</dbReference>
<dbReference type="InterPro" id="IPR035427">
    <property type="entry name" value="Tim10-like_dom_sf"/>
</dbReference>
<dbReference type="PANTHER" id="PTHR13172">
    <property type="entry name" value="MITOCHONDRIAL IMPORT INNER MEMBRANE TRANSLOCASE SUBUNIT TIM9B"/>
    <property type="match status" value="1"/>
</dbReference>
<dbReference type="Pfam" id="PF02953">
    <property type="entry name" value="zf-Tim10_DDP"/>
    <property type="match status" value="1"/>
</dbReference>
<dbReference type="SUPFAM" id="SSF144122">
    <property type="entry name" value="Tim10-like"/>
    <property type="match status" value="1"/>
</dbReference>
<comment type="function">
    <text evidence="1">Component of the TIM22 complex, a complex that mediates the import and insertion of multi-pass transmembrane proteins into the mitochondrial inner membrane. The TIM22 complex forms a twin-pore translocase that uses the membrane potential as the external driving force. In the TIM22 complex, it may act as a docking point for the soluble 70 kDa complex that guides the target proteins in transit through the aqueous mitochondrial intermembrane space (By similarity).</text>
</comment>
<comment type="subunit">
    <text evidence="1">Component of the TIM22 complex, whose core is composed of Tim22, associated with peripheral protein Tim9b/Tim10b and the 70 kDa heterohexamer. In most cases, the 70 kDa complex is composed of TIMM9 and TIMM10 (By similarity).</text>
</comment>
<comment type="subcellular location">
    <subcellularLocation>
        <location evidence="1">Mitochondrion inner membrane</location>
        <topology evidence="1">Peripheral membrane protein</topology>
    </subcellularLocation>
</comment>
<comment type="domain">
    <text evidence="1">The twin CX3C motif contains 4 conserved Cys residues that form 2 disulfide bonds in the mitochondrial intermembrane space. However, during the transit of Tim9b/Tim10b from the cytoplasm into the mitochondrion, the Cys residues probably coordinate zinc, thereby preventing folding and allowing its transfer across the mitochondrial outer membrane (By similarity).</text>
</comment>
<comment type="similarity">
    <text evidence="3">Belongs to the small Tim family.</text>
</comment>
<evidence type="ECO:0000250" key="1"/>
<evidence type="ECO:0000256" key="2">
    <source>
        <dbReference type="SAM" id="MobiDB-lite"/>
    </source>
</evidence>
<evidence type="ECO:0000305" key="3"/>
<keyword id="KW-1015">Disulfide bond</keyword>
<keyword id="KW-0472">Membrane</keyword>
<keyword id="KW-0479">Metal-binding</keyword>
<keyword id="KW-0496">Mitochondrion</keyword>
<keyword id="KW-0999">Mitochondrion inner membrane</keyword>
<keyword id="KW-0653">Protein transport</keyword>
<keyword id="KW-1185">Reference proteome</keyword>
<keyword id="KW-0811">Translocation</keyword>
<keyword id="KW-0813">Transport</keyword>
<keyword id="KW-0862">Zinc</keyword>
<reference key="1">
    <citation type="journal article" date="1999" name="FEBS Lett.">
        <title>The mitochondrial TIM22 preprotein translocase is highly conserved throughout the eukaryotic kingdom.</title>
        <authorList>
            <person name="Bauer M.F."/>
            <person name="Rothbauer U."/>
            <person name="Muehlenbein N."/>
            <person name="Smith R.J.H."/>
            <person name="Gerbitz K.-D."/>
            <person name="Neupert W."/>
            <person name="Brunner M."/>
            <person name="Hofmann S."/>
        </authorList>
    </citation>
    <scope>NUCLEOTIDE SEQUENCE [MRNA]</scope>
</reference>
<reference key="2">
    <citation type="journal article" date="2000" name="Science">
        <title>The genome sequence of Drosophila melanogaster.</title>
        <authorList>
            <person name="Adams M.D."/>
            <person name="Celniker S.E."/>
            <person name="Holt R.A."/>
            <person name="Evans C.A."/>
            <person name="Gocayne J.D."/>
            <person name="Amanatides P.G."/>
            <person name="Scherer S.E."/>
            <person name="Li P.W."/>
            <person name="Hoskins R.A."/>
            <person name="Galle R.F."/>
            <person name="George R.A."/>
            <person name="Lewis S.E."/>
            <person name="Richards S."/>
            <person name="Ashburner M."/>
            <person name="Henderson S.N."/>
            <person name="Sutton G.G."/>
            <person name="Wortman J.R."/>
            <person name="Yandell M.D."/>
            <person name="Zhang Q."/>
            <person name="Chen L.X."/>
            <person name="Brandon R.C."/>
            <person name="Rogers Y.-H.C."/>
            <person name="Blazej R.G."/>
            <person name="Champe M."/>
            <person name="Pfeiffer B.D."/>
            <person name="Wan K.H."/>
            <person name="Doyle C."/>
            <person name="Baxter E.G."/>
            <person name="Helt G."/>
            <person name="Nelson C.R."/>
            <person name="Miklos G.L.G."/>
            <person name="Abril J.F."/>
            <person name="Agbayani A."/>
            <person name="An H.-J."/>
            <person name="Andrews-Pfannkoch C."/>
            <person name="Baldwin D."/>
            <person name="Ballew R.M."/>
            <person name="Basu A."/>
            <person name="Baxendale J."/>
            <person name="Bayraktaroglu L."/>
            <person name="Beasley E.M."/>
            <person name="Beeson K.Y."/>
            <person name="Benos P.V."/>
            <person name="Berman B.P."/>
            <person name="Bhandari D."/>
            <person name="Bolshakov S."/>
            <person name="Borkova D."/>
            <person name="Botchan M.R."/>
            <person name="Bouck J."/>
            <person name="Brokstein P."/>
            <person name="Brottier P."/>
            <person name="Burtis K.C."/>
            <person name="Busam D.A."/>
            <person name="Butler H."/>
            <person name="Cadieu E."/>
            <person name="Center A."/>
            <person name="Chandra I."/>
            <person name="Cherry J.M."/>
            <person name="Cawley S."/>
            <person name="Dahlke C."/>
            <person name="Davenport L.B."/>
            <person name="Davies P."/>
            <person name="de Pablos B."/>
            <person name="Delcher A."/>
            <person name="Deng Z."/>
            <person name="Mays A.D."/>
            <person name="Dew I."/>
            <person name="Dietz S.M."/>
            <person name="Dodson K."/>
            <person name="Doup L.E."/>
            <person name="Downes M."/>
            <person name="Dugan-Rocha S."/>
            <person name="Dunkov B.C."/>
            <person name="Dunn P."/>
            <person name="Durbin K.J."/>
            <person name="Evangelista C.C."/>
            <person name="Ferraz C."/>
            <person name="Ferriera S."/>
            <person name="Fleischmann W."/>
            <person name="Fosler C."/>
            <person name="Gabrielian A.E."/>
            <person name="Garg N.S."/>
            <person name="Gelbart W.M."/>
            <person name="Glasser K."/>
            <person name="Glodek A."/>
            <person name="Gong F."/>
            <person name="Gorrell J.H."/>
            <person name="Gu Z."/>
            <person name="Guan P."/>
            <person name="Harris M."/>
            <person name="Harris N.L."/>
            <person name="Harvey D.A."/>
            <person name="Heiman T.J."/>
            <person name="Hernandez J.R."/>
            <person name="Houck J."/>
            <person name="Hostin D."/>
            <person name="Houston K.A."/>
            <person name="Howland T.J."/>
            <person name="Wei M.-H."/>
            <person name="Ibegwam C."/>
            <person name="Jalali M."/>
            <person name="Kalush F."/>
            <person name="Karpen G.H."/>
            <person name="Ke Z."/>
            <person name="Kennison J.A."/>
            <person name="Ketchum K.A."/>
            <person name="Kimmel B.E."/>
            <person name="Kodira C.D."/>
            <person name="Kraft C.L."/>
            <person name="Kravitz S."/>
            <person name="Kulp D."/>
            <person name="Lai Z."/>
            <person name="Lasko P."/>
            <person name="Lei Y."/>
            <person name="Levitsky A.A."/>
            <person name="Li J.H."/>
            <person name="Li Z."/>
            <person name="Liang Y."/>
            <person name="Lin X."/>
            <person name="Liu X."/>
            <person name="Mattei B."/>
            <person name="McIntosh T.C."/>
            <person name="McLeod M.P."/>
            <person name="McPherson D."/>
            <person name="Merkulov G."/>
            <person name="Milshina N.V."/>
            <person name="Mobarry C."/>
            <person name="Morris J."/>
            <person name="Moshrefi A."/>
            <person name="Mount S.M."/>
            <person name="Moy M."/>
            <person name="Murphy B."/>
            <person name="Murphy L."/>
            <person name="Muzny D.M."/>
            <person name="Nelson D.L."/>
            <person name="Nelson D.R."/>
            <person name="Nelson K.A."/>
            <person name="Nixon K."/>
            <person name="Nusskern D.R."/>
            <person name="Pacleb J.M."/>
            <person name="Palazzolo M."/>
            <person name="Pittman G.S."/>
            <person name="Pan S."/>
            <person name="Pollard J."/>
            <person name="Puri V."/>
            <person name="Reese M.G."/>
            <person name="Reinert K."/>
            <person name="Remington K."/>
            <person name="Saunders R.D.C."/>
            <person name="Scheeler F."/>
            <person name="Shen H."/>
            <person name="Shue B.C."/>
            <person name="Siden-Kiamos I."/>
            <person name="Simpson M."/>
            <person name="Skupski M.P."/>
            <person name="Smith T.J."/>
            <person name="Spier E."/>
            <person name="Spradling A.C."/>
            <person name="Stapleton M."/>
            <person name="Strong R."/>
            <person name="Sun E."/>
            <person name="Svirskas R."/>
            <person name="Tector C."/>
            <person name="Turner R."/>
            <person name="Venter E."/>
            <person name="Wang A.H."/>
            <person name="Wang X."/>
            <person name="Wang Z.-Y."/>
            <person name="Wassarman D.A."/>
            <person name="Weinstock G.M."/>
            <person name="Weissenbach J."/>
            <person name="Williams S.M."/>
            <person name="Woodage T."/>
            <person name="Worley K.C."/>
            <person name="Wu D."/>
            <person name="Yang S."/>
            <person name="Yao Q.A."/>
            <person name="Ye J."/>
            <person name="Yeh R.-F."/>
            <person name="Zaveri J.S."/>
            <person name="Zhan M."/>
            <person name="Zhang G."/>
            <person name="Zhao Q."/>
            <person name="Zheng L."/>
            <person name="Zheng X.H."/>
            <person name="Zhong F.N."/>
            <person name="Zhong W."/>
            <person name="Zhou X."/>
            <person name="Zhu S.C."/>
            <person name="Zhu X."/>
            <person name="Smith H.O."/>
            <person name="Gibbs R.A."/>
            <person name="Myers E.W."/>
            <person name="Rubin G.M."/>
            <person name="Venter J.C."/>
        </authorList>
    </citation>
    <scope>NUCLEOTIDE SEQUENCE [LARGE SCALE GENOMIC DNA]</scope>
    <source>
        <strain>Berkeley</strain>
    </source>
</reference>
<reference key="3">
    <citation type="journal article" date="2002" name="Genome Biol.">
        <title>Annotation of the Drosophila melanogaster euchromatic genome: a systematic review.</title>
        <authorList>
            <person name="Misra S."/>
            <person name="Crosby M.A."/>
            <person name="Mungall C.J."/>
            <person name="Matthews B.B."/>
            <person name="Campbell K.S."/>
            <person name="Hradecky P."/>
            <person name="Huang Y."/>
            <person name="Kaminker J.S."/>
            <person name="Millburn G.H."/>
            <person name="Prochnik S.E."/>
            <person name="Smith C.D."/>
            <person name="Tupy J.L."/>
            <person name="Whitfield E.J."/>
            <person name="Bayraktaroglu L."/>
            <person name="Berman B.P."/>
            <person name="Bettencourt B.R."/>
            <person name="Celniker S.E."/>
            <person name="de Grey A.D.N.J."/>
            <person name="Drysdale R.A."/>
            <person name="Harris N.L."/>
            <person name="Richter J."/>
            <person name="Russo S."/>
            <person name="Schroeder A.J."/>
            <person name="Shu S.Q."/>
            <person name="Stapleton M."/>
            <person name="Yamada C."/>
            <person name="Ashburner M."/>
            <person name="Gelbart W.M."/>
            <person name="Rubin G.M."/>
            <person name="Lewis S.E."/>
        </authorList>
    </citation>
    <scope>GENOME REANNOTATION</scope>
    <source>
        <strain>Berkeley</strain>
    </source>
</reference>
<organism>
    <name type="scientific">Drosophila melanogaster</name>
    <name type="common">Fruit fly</name>
    <dbReference type="NCBI Taxonomy" id="7227"/>
    <lineage>
        <taxon>Eukaryota</taxon>
        <taxon>Metazoa</taxon>
        <taxon>Ecdysozoa</taxon>
        <taxon>Arthropoda</taxon>
        <taxon>Hexapoda</taxon>
        <taxon>Insecta</taxon>
        <taxon>Pterygota</taxon>
        <taxon>Neoptera</taxon>
        <taxon>Endopterygota</taxon>
        <taxon>Diptera</taxon>
        <taxon>Brachycera</taxon>
        <taxon>Muscomorpha</taxon>
        <taxon>Ephydroidea</taxon>
        <taxon>Drosophilidae</taxon>
        <taxon>Drosophila</taxon>
        <taxon>Sophophora</taxon>
    </lineage>
</organism>
<gene>
    <name type="primary">Tim9b</name>
    <name type="synonym">tim9</name>
    <name type="ORF">CG17767</name>
</gene>
<protein>
    <recommendedName>
        <fullName>Mitochondrial import inner membrane translocase subunit Tim10B</fullName>
    </recommendedName>
    <alternativeName>
        <fullName>Mitochondrial import inner membrane translocase subunit Tim9B</fullName>
    </alternativeName>
    <alternativeName>
        <fullName>Tim10b</fullName>
    </alternativeName>
</protein>